<accession>Q1CRW8</accession>
<comment type="subunit">
    <text evidence="1">Part of the 50S ribosomal subunit. Contacts protein L32.</text>
</comment>
<comment type="similarity">
    <text evidence="1">Belongs to the bacterial ribosomal protein bL17 family.</text>
</comment>
<keyword id="KW-0687">Ribonucleoprotein</keyword>
<keyword id="KW-0689">Ribosomal protein</keyword>
<reference key="1">
    <citation type="journal article" date="2006" name="Proc. Natl. Acad. Sci. U.S.A.">
        <title>The complete genome sequence of a chronic atrophic gastritis Helicobacter pylori strain: evolution during disease progression.</title>
        <authorList>
            <person name="Oh J.D."/>
            <person name="Kling-Baeckhed H."/>
            <person name="Giannakis M."/>
            <person name="Xu J."/>
            <person name="Fulton R.S."/>
            <person name="Fulton L.A."/>
            <person name="Cordum H.S."/>
            <person name="Wang C."/>
            <person name="Elliott G."/>
            <person name="Edwards J."/>
            <person name="Mardis E.R."/>
            <person name="Engstrand L.G."/>
            <person name="Gordon J.I."/>
        </authorList>
    </citation>
    <scope>NUCLEOTIDE SEQUENCE [LARGE SCALE GENOMIC DNA]</scope>
    <source>
        <strain>HPAG1</strain>
    </source>
</reference>
<dbReference type="EMBL" id="CP000241">
    <property type="protein sequence ID" value="ABF85304.1"/>
    <property type="molecule type" value="Genomic_DNA"/>
</dbReference>
<dbReference type="RefSeq" id="WP_001216119.1">
    <property type="nucleotide sequence ID" value="NC_008086.1"/>
</dbReference>
<dbReference type="SMR" id="Q1CRW8"/>
<dbReference type="GeneID" id="93237577"/>
<dbReference type="KEGG" id="hpa:HPAG1_1237"/>
<dbReference type="HOGENOM" id="CLU_074407_2_0_7"/>
<dbReference type="GO" id="GO:0022625">
    <property type="term" value="C:cytosolic large ribosomal subunit"/>
    <property type="evidence" value="ECO:0007669"/>
    <property type="project" value="TreeGrafter"/>
</dbReference>
<dbReference type="GO" id="GO:0003735">
    <property type="term" value="F:structural constituent of ribosome"/>
    <property type="evidence" value="ECO:0007669"/>
    <property type="project" value="InterPro"/>
</dbReference>
<dbReference type="GO" id="GO:0006412">
    <property type="term" value="P:translation"/>
    <property type="evidence" value="ECO:0007669"/>
    <property type="project" value="UniProtKB-UniRule"/>
</dbReference>
<dbReference type="FunFam" id="3.90.1030.10:FF:000003">
    <property type="entry name" value="50S ribosomal protein L17"/>
    <property type="match status" value="1"/>
</dbReference>
<dbReference type="Gene3D" id="3.90.1030.10">
    <property type="entry name" value="Ribosomal protein L17"/>
    <property type="match status" value="1"/>
</dbReference>
<dbReference type="HAMAP" id="MF_01368">
    <property type="entry name" value="Ribosomal_bL17"/>
    <property type="match status" value="1"/>
</dbReference>
<dbReference type="InterPro" id="IPR000456">
    <property type="entry name" value="Ribosomal_bL17"/>
</dbReference>
<dbReference type="InterPro" id="IPR047859">
    <property type="entry name" value="Ribosomal_bL17_CS"/>
</dbReference>
<dbReference type="InterPro" id="IPR036373">
    <property type="entry name" value="Ribosomal_bL17_sf"/>
</dbReference>
<dbReference type="NCBIfam" id="TIGR00059">
    <property type="entry name" value="L17"/>
    <property type="match status" value="1"/>
</dbReference>
<dbReference type="PANTHER" id="PTHR14413:SF16">
    <property type="entry name" value="LARGE RIBOSOMAL SUBUNIT PROTEIN BL17M"/>
    <property type="match status" value="1"/>
</dbReference>
<dbReference type="PANTHER" id="PTHR14413">
    <property type="entry name" value="RIBOSOMAL PROTEIN L17"/>
    <property type="match status" value="1"/>
</dbReference>
<dbReference type="Pfam" id="PF01196">
    <property type="entry name" value="Ribosomal_L17"/>
    <property type="match status" value="1"/>
</dbReference>
<dbReference type="SUPFAM" id="SSF64263">
    <property type="entry name" value="Prokaryotic ribosomal protein L17"/>
    <property type="match status" value="1"/>
</dbReference>
<dbReference type="PROSITE" id="PS01167">
    <property type="entry name" value="RIBOSOMAL_L17"/>
    <property type="match status" value="1"/>
</dbReference>
<evidence type="ECO:0000255" key="1">
    <source>
        <dbReference type="HAMAP-Rule" id="MF_01368"/>
    </source>
</evidence>
<evidence type="ECO:0000305" key="2"/>
<sequence>MRHKHGYRKLGRTSSHRKALLKNLAIALIEHNKIETGIYKAKELRSYIEKLTTAARVGDFNAHRHVFAYLQNKEATHKLVTEIAPKYAQRNGGYTRIQRTTFRRGDASTLATIEFV</sequence>
<organism>
    <name type="scientific">Helicobacter pylori (strain HPAG1)</name>
    <dbReference type="NCBI Taxonomy" id="357544"/>
    <lineage>
        <taxon>Bacteria</taxon>
        <taxon>Pseudomonadati</taxon>
        <taxon>Campylobacterota</taxon>
        <taxon>Epsilonproteobacteria</taxon>
        <taxon>Campylobacterales</taxon>
        <taxon>Helicobacteraceae</taxon>
        <taxon>Helicobacter</taxon>
    </lineage>
</organism>
<name>RL17_HELPH</name>
<feature type="chain" id="PRO_1000055842" description="Large ribosomal subunit protein bL17">
    <location>
        <begin position="1"/>
        <end position="116"/>
    </location>
</feature>
<protein>
    <recommendedName>
        <fullName evidence="1">Large ribosomal subunit protein bL17</fullName>
    </recommendedName>
    <alternativeName>
        <fullName evidence="2">50S ribosomal protein L17</fullName>
    </alternativeName>
</protein>
<gene>
    <name evidence="1" type="primary">rplQ</name>
    <name type="ordered locus">HPAG1_1237</name>
</gene>
<proteinExistence type="inferred from homology"/>